<gene>
    <name evidence="1" type="primary">ahcY</name>
    <name type="ordered locus">BSUIS_A1939</name>
</gene>
<reference key="1">
    <citation type="submission" date="2007-12" db="EMBL/GenBank/DDBJ databases">
        <title>Brucella suis ATCC 23445 whole genome shotgun sequencing project.</title>
        <authorList>
            <person name="Setubal J.C."/>
            <person name="Bowns C."/>
            <person name="Boyle S."/>
            <person name="Crasta O.R."/>
            <person name="Czar M.J."/>
            <person name="Dharmanolla C."/>
            <person name="Gillespie J.J."/>
            <person name="Kenyon R.W."/>
            <person name="Lu J."/>
            <person name="Mane S."/>
            <person name="Mohapatra S."/>
            <person name="Nagrani S."/>
            <person name="Purkayastha A."/>
            <person name="Rajasimha H.K."/>
            <person name="Shallom J.M."/>
            <person name="Shallom S."/>
            <person name="Shukla M."/>
            <person name="Snyder E.E."/>
            <person name="Sobral B.W."/>
            <person name="Wattam A.R."/>
            <person name="Will R."/>
            <person name="Williams K."/>
            <person name="Yoo H."/>
            <person name="Bruce D."/>
            <person name="Detter C."/>
            <person name="Munk C."/>
            <person name="Brettin T.S."/>
        </authorList>
    </citation>
    <scope>NUCLEOTIDE SEQUENCE [LARGE SCALE GENOMIC DNA]</scope>
    <source>
        <strain>ATCC 23445 / NCTC 10510</strain>
    </source>
</reference>
<protein>
    <recommendedName>
        <fullName evidence="1">Adenosylhomocysteinase</fullName>
        <ecNumber evidence="1">3.13.2.1</ecNumber>
    </recommendedName>
    <alternativeName>
        <fullName evidence="1">S-adenosyl-L-homocysteine hydrolase</fullName>
        <shortName evidence="1">AdoHcyase</shortName>
    </alternativeName>
</protein>
<dbReference type="EC" id="3.13.2.1" evidence="1"/>
<dbReference type="EMBL" id="CP000911">
    <property type="protein sequence ID" value="ABY38949.1"/>
    <property type="molecule type" value="Genomic_DNA"/>
</dbReference>
<dbReference type="RefSeq" id="WP_002965162.1">
    <property type="nucleotide sequence ID" value="NC_010169.1"/>
</dbReference>
<dbReference type="SMR" id="B0CJJ7"/>
<dbReference type="GeneID" id="97534642"/>
<dbReference type="KEGG" id="bmt:BSUIS_A1939"/>
<dbReference type="HOGENOM" id="CLU_025194_2_0_5"/>
<dbReference type="UniPathway" id="UPA00314">
    <property type="reaction ID" value="UER00076"/>
</dbReference>
<dbReference type="Proteomes" id="UP000008545">
    <property type="component" value="Chromosome I"/>
</dbReference>
<dbReference type="GO" id="GO:0005829">
    <property type="term" value="C:cytosol"/>
    <property type="evidence" value="ECO:0007669"/>
    <property type="project" value="TreeGrafter"/>
</dbReference>
<dbReference type="GO" id="GO:0004013">
    <property type="term" value="F:adenosylhomocysteinase activity"/>
    <property type="evidence" value="ECO:0007669"/>
    <property type="project" value="UniProtKB-UniRule"/>
</dbReference>
<dbReference type="GO" id="GO:0071269">
    <property type="term" value="P:L-homocysteine biosynthetic process"/>
    <property type="evidence" value="ECO:0007669"/>
    <property type="project" value="UniProtKB-UniRule"/>
</dbReference>
<dbReference type="GO" id="GO:0006730">
    <property type="term" value="P:one-carbon metabolic process"/>
    <property type="evidence" value="ECO:0007669"/>
    <property type="project" value="UniProtKB-KW"/>
</dbReference>
<dbReference type="GO" id="GO:0033353">
    <property type="term" value="P:S-adenosylmethionine cycle"/>
    <property type="evidence" value="ECO:0007669"/>
    <property type="project" value="TreeGrafter"/>
</dbReference>
<dbReference type="CDD" id="cd00401">
    <property type="entry name" value="SAHH"/>
    <property type="match status" value="1"/>
</dbReference>
<dbReference type="FunFam" id="3.40.50.720:FF:000004">
    <property type="entry name" value="Adenosylhomocysteinase"/>
    <property type="match status" value="1"/>
</dbReference>
<dbReference type="Gene3D" id="3.40.50.1480">
    <property type="entry name" value="Adenosylhomocysteinase-like"/>
    <property type="match status" value="1"/>
</dbReference>
<dbReference type="Gene3D" id="3.40.50.720">
    <property type="entry name" value="NAD(P)-binding Rossmann-like Domain"/>
    <property type="match status" value="1"/>
</dbReference>
<dbReference type="HAMAP" id="MF_00563">
    <property type="entry name" value="AdoHcyase"/>
    <property type="match status" value="1"/>
</dbReference>
<dbReference type="InterPro" id="IPR042172">
    <property type="entry name" value="Adenosylhomocyst_ase-like_sf"/>
</dbReference>
<dbReference type="InterPro" id="IPR000043">
    <property type="entry name" value="Adenosylhomocysteinase-like"/>
</dbReference>
<dbReference type="InterPro" id="IPR015878">
    <property type="entry name" value="Ado_hCys_hydrolase_NAD-bd"/>
</dbReference>
<dbReference type="InterPro" id="IPR036291">
    <property type="entry name" value="NAD(P)-bd_dom_sf"/>
</dbReference>
<dbReference type="InterPro" id="IPR020082">
    <property type="entry name" value="S-Ado-L-homoCys_hydrolase_CS"/>
</dbReference>
<dbReference type="NCBIfam" id="TIGR00936">
    <property type="entry name" value="ahcY"/>
    <property type="match status" value="1"/>
</dbReference>
<dbReference type="NCBIfam" id="NF004005">
    <property type="entry name" value="PRK05476.2-3"/>
    <property type="match status" value="1"/>
</dbReference>
<dbReference type="PANTHER" id="PTHR23420">
    <property type="entry name" value="ADENOSYLHOMOCYSTEINASE"/>
    <property type="match status" value="1"/>
</dbReference>
<dbReference type="PANTHER" id="PTHR23420:SF0">
    <property type="entry name" value="ADENOSYLHOMOCYSTEINASE"/>
    <property type="match status" value="1"/>
</dbReference>
<dbReference type="Pfam" id="PF05221">
    <property type="entry name" value="AdoHcyase"/>
    <property type="match status" value="1"/>
</dbReference>
<dbReference type="Pfam" id="PF00670">
    <property type="entry name" value="AdoHcyase_NAD"/>
    <property type="match status" value="1"/>
</dbReference>
<dbReference type="PIRSF" id="PIRSF001109">
    <property type="entry name" value="Ad_hcy_hydrolase"/>
    <property type="match status" value="1"/>
</dbReference>
<dbReference type="SMART" id="SM00996">
    <property type="entry name" value="AdoHcyase"/>
    <property type="match status" value="1"/>
</dbReference>
<dbReference type="SMART" id="SM00997">
    <property type="entry name" value="AdoHcyase_NAD"/>
    <property type="match status" value="1"/>
</dbReference>
<dbReference type="SUPFAM" id="SSF52283">
    <property type="entry name" value="Formate/glycerate dehydrogenase catalytic domain-like"/>
    <property type="match status" value="1"/>
</dbReference>
<dbReference type="SUPFAM" id="SSF51735">
    <property type="entry name" value="NAD(P)-binding Rossmann-fold domains"/>
    <property type="match status" value="1"/>
</dbReference>
<dbReference type="PROSITE" id="PS00738">
    <property type="entry name" value="ADOHCYASE_1"/>
    <property type="match status" value="1"/>
</dbReference>
<dbReference type="PROSITE" id="PS00739">
    <property type="entry name" value="ADOHCYASE_2"/>
    <property type="match status" value="1"/>
</dbReference>
<feature type="chain" id="PRO_1000082277" description="Adenosylhomocysteinase">
    <location>
        <begin position="1"/>
        <end position="466"/>
    </location>
</feature>
<feature type="binding site" evidence="1">
    <location>
        <position position="57"/>
    </location>
    <ligand>
        <name>substrate</name>
    </ligand>
</feature>
<feature type="binding site" evidence="1">
    <location>
        <position position="132"/>
    </location>
    <ligand>
        <name>substrate</name>
    </ligand>
</feature>
<feature type="binding site" evidence="1">
    <location>
        <position position="192"/>
    </location>
    <ligand>
        <name>substrate</name>
    </ligand>
</feature>
<feature type="binding site" evidence="1">
    <location>
        <begin position="193"/>
        <end position="195"/>
    </location>
    <ligand>
        <name>NAD(+)</name>
        <dbReference type="ChEBI" id="CHEBI:57540"/>
    </ligand>
</feature>
<feature type="binding site" evidence="1">
    <location>
        <position position="222"/>
    </location>
    <ligand>
        <name>substrate</name>
    </ligand>
</feature>
<feature type="binding site" evidence="1">
    <location>
        <position position="226"/>
    </location>
    <ligand>
        <name>substrate</name>
    </ligand>
</feature>
<feature type="binding site" evidence="1">
    <location>
        <position position="227"/>
    </location>
    <ligand>
        <name>NAD(+)</name>
        <dbReference type="ChEBI" id="CHEBI:57540"/>
    </ligand>
</feature>
<feature type="binding site" evidence="1">
    <location>
        <begin position="256"/>
        <end position="261"/>
    </location>
    <ligand>
        <name>NAD(+)</name>
        <dbReference type="ChEBI" id="CHEBI:57540"/>
    </ligand>
</feature>
<feature type="binding site" evidence="1">
    <location>
        <position position="279"/>
    </location>
    <ligand>
        <name>NAD(+)</name>
        <dbReference type="ChEBI" id="CHEBI:57540"/>
    </ligand>
</feature>
<feature type="binding site" evidence="1">
    <location>
        <position position="314"/>
    </location>
    <ligand>
        <name>NAD(+)</name>
        <dbReference type="ChEBI" id="CHEBI:57540"/>
    </ligand>
</feature>
<feature type="binding site" evidence="1">
    <location>
        <begin position="335"/>
        <end position="337"/>
    </location>
    <ligand>
        <name>NAD(+)</name>
        <dbReference type="ChEBI" id="CHEBI:57540"/>
    </ligand>
</feature>
<feature type="binding site" evidence="1">
    <location>
        <position position="380"/>
    </location>
    <ligand>
        <name>NAD(+)</name>
        <dbReference type="ChEBI" id="CHEBI:57540"/>
    </ligand>
</feature>
<keyword id="KW-0963">Cytoplasm</keyword>
<keyword id="KW-0378">Hydrolase</keyword>
<keyword id="KW-0520">NAD</keyword>
<keyword id="KW-0554">One-carbon metabolism</keyword>
<name>SAHH_BRUSI</name>
<proteinExistence type="inferred from homology"/>
<accession>B0CJJ7</accession>
<organism>
    <name type="scientific">Brucella suis (strain ATCC 23445 / NCTC 10510)</name>
    <dbReference type="NCBI Taxonomy" id="470137"/>
    <lineage>
        <taxon>Bacteria</taxon>
        <taxon>Pseudomonadati</taxon>
        <taxon>Pseudomonadota</taxon>
        <taxon>Alphaproteobacteria</taxon>
        <taxon>Hyphomicrobiales</taxon>
        <taxon>Brucellaceae</taxon>
        <taxon>Brucella/Ochrobactrum group</taxon>
        <taxon>Brucella</taxon>
    </lineage>
</organism>
<evidence type="ECO:0000255" key="1">
    <source>
        <dbReference type="HAMAP-Rule" id="MF_00563"/>
    </source>
</evidence>
<comment type="function">
    <text evidence="1">May play a key role in the regulation of the intracellular concentration of adenosylhomocysteine.</text>
</comment>
<comment type="catalytic activity">
    <reaction evidence="1">
        <text>S-adenosyl-L-homocysteine + H2O = L-homocysteine + adenosine</text>
        <dbReference type="Rhea" id="RHEA:21708"/>
        <dbReference type="ChEBI" id="CHEBI:15377"/>
        <dbReference type="ChEBI" id="CHEBI:16335"/>
        <dbReference type="ChEBI" id="CHEBI:57856"/>
        <dbReference type="ChEBI" id="CHEBI:58199"/>
        <dbReference type="EC" id="3.13.2.1"/>
    </reaction>
</comment>
<comment type="cofactor">
    <cofactor evidence="1">
        <name>NAD(+)</name>
        <dbReference type="ChEBI" id="CHEBI:57540"/>
    </cofactor>
    <text evidence="1">Binds 1 NAD(+) per subunit.</text>
</comment>
<comment type="pathway">
    <text evidence="1">Amino-acid biosynthesis; L-homocysteine biosynthesis; L-homocysteine from S-adenosyl-L-homocysteine: step 1/1.</text>
</comment>
<comment type="subcellular location">
    <subcellularLocation>
        <location evidence="1">Cytoplasm</location>
    </subcellularLocation>
</comment>
<comment type="similarity">
    <text evidence="1">Belongs to the adenosylhomocysteinase family.</text>
</comment>
<sequence>MTASQDFVVKDISLADWGRKELDIAETEMPGLMAAREEFGKSQPLKGARISGSLHMTIQTAVLIETLKVLGAEVRWASCNIFSTQDHAAAAIAATGTPVFAVKGETLEEYWTYTDQIFQWPDGEPSNMILDDGGDATMYILIGARAEAGEDVLSNPQSEEEEVLFAQIKKRMAATPGFFTKQRAAIKGVTEETTTGVNRLYQLQKKGLLPFPAINVNDSVTKSKFDNKYGCKESLVDGIRRGTDVMMAGKVAVVCGYGDVGKGSAQSLAGAGARVKVTEVDPICALQAAMDGFEVVTLDDAASTADIVVTTTGNKDVITIDHMRKMKDMCIVGNIGHFDNEIQVAALRNLKWTNVKPQVDLIEFPDGKRLILLSEGRLLNLGNATGHPSFVMSASFTNQVLGQIELFTRTDAYKNEVYVLPKHLDEKVARLHLDKLGAKLTVLSEEQAAYIGVTPQGPFKSEHYRY</sequence>